<comment type="function">
    <text evidence="3 6">Catalyzes the peptide bond hydrolysis in dipeptides, displaying a non-redundant activity toward threonyl dipeptides (PubMed:31587987). Mediates threonyl dipeptide catabolism in a tissue-specific way (PubMed:31587987). Has high dipeptidase activity toward cysteinylglycine, an intermediate metabolite in glutathione metabolism (By similarity). Metabolizes N-lactoyl-amino acids, both through hydrolysis to form lactic acid and amino acids, as well as through their formation by reverse proteolysis (By similarity). Plays a role in the regulation of cell cycle arrest and apoptosis (By similarity).</text>
</comment>
<comment type="catalytic activity">
    <reaction evidence="4 6">
        <text>Hydrolysis of dipeptides, preferentially hydrophobic dipeptides including prolyl amino acids.</text>
        <dbReference type="EC" id="3.4.13.18"/>
    </reaction>
</comment>
<comment type="catalytic activity">
    <reaction evidence="6">
        <text>L-threonyl-L-threonine + H2O = 2 L-threonine</text>
        <dbReference type="Rhea" id="RHEA:67360"/>
        <dbReference type="ChEBI" id="CHEBI:15377"/>
        <dbReference type="ChEBI" id="CHEBI:57926"/>
        <dbReference type="ChEBI" id="CHEBI:169953"/>
    </reaction>
    <physiologicalReaction direction="left-to-right" evidence="6">
        <dbReference type="Rhea" id="RHEA:67361"/>
    </physiologicalReaction>
</comment>
<comment type="catalytic activity">
    <reaction evidence="6">
        <text>L-threonyl-L-serine + H2O = L-threonine + L-serine</text>
        <dbReference type="Rhea" id="RHEA:67364"/>
        <dbReference type="ChEBI" id="CHEBI:15377"/>
        <dbReference type="ChEBI" id="CHEBI:33384"/>
        <dbReference type="ChEBI" id="CHEBI:57926"/>
        <dbReference type="ChEBI" id="CHEBI:169954"/>
    </reaction>
    <physiologicalReaction direction="left-to-right" evidence="6">
        <dbReference type="Rhea" id="RHEA:67365"/>
    </physiologicalReaction>
</comment>
<comment type="catalytic activity">
    <reaction evidence="6">
        <text>L-seryl-L-threonine + H2O = L-threonine + L-serine</text>
        <dbReference type="Rhea" id="RHEA:67372"/>
        <dbReference type="ChEBI" id="CHEBI:15377"/>
        <dbReference type="ChEBI" id="CHEBI:33384"/>
        <dbReference type="ChEBI" id="CHEBI:57926"/>
        <dbReference type="ChEBI" id="CHEBI:169955"/>
    </reaction>
    <physiologicalReaction direction="left-to-right" evidence="6">
        <dbReference type="Rhea" id="RHEA:67373"/>
    </physiologicalReaction>
</comment>
<comment type="catalytic activity">
    <reaction evidence="3">
        <text>L-cysteinylglycine + H2O = L-cysteine + glycine</text>
        <dbReference type="Rhea" id="RHEA:28783"/>
        <dbReference type="ChEBI" id="CHEBI:15377"/>
        <dbReference type="ChEBI" id="CHEBI:35235"/>
        <dbReference type="ChEBI" id="CHEBI:57305"/>
        <dbReference type="ChEBI" id="CHEBI:61694"/>
    </reaction>
    <physiologicalReaction direction="left-to-right" evidence="3">
        <dbReference type="Rhea" id="RHEA:28784"/>
    </physiologicalReaction>
</comment>
<comment type="catalytic activity">
    <reaction evidence="3">
        <text>L-alanyl-L-cysteine + H2O = L-cysteine + L-alanine</text>
        <dbReference type="Rhea" id="RHEA:67380"/>
        <dbReference type="ChEBI" id="CHEBI:15377"/>
        <dbReference type="ChEBI" id="CHEBI:35235"/>
        <dbReference type="ChEBI" id="CHEBI:57972"/>
        <dbReference type="ChEBI" id="CHEBI:169958"/>
    </reaction>
    <physiologicalReaction direction="left-to-right" evidence="3">
        <dbReference type="Rhea" id="RHEA:67381"/>
    </physiologicalReaction>
</comment>
<comment type="catalytic activity">
    <reaction evidence="3">
        <text>(S)-lactate + L-phenylalanine = N-[(S)-lactoyl]-L-phenylalanine + H2O</text>
        <dbReference type="Rhea" id="RHEA:66724"/>
        <dbReference type="ChEBI" id="CHEBI:15377"/>
        <dbReference type="ChEBI" id="CHEBI:16651"/>
        <dbReference type="ChEBI" id="CHEBI:58095"/>
        <dbReference type="ChEBI" id="CHEBI:167456"/>
    </reaction>
    <physiologicalReaction direction="left-to-right" evidence="3">
        <dbReference type="Rhea" id="RHEA:66725"/>
    </physiologicalReaction>
    <physiologicalReaction direction="right-to-left" evidence="3">
        <dbReference type="Rhea" id="RHEA:66726"/>
    </physiologicalReaction>
</comment>
<comment type="cofactor">
    <cofactor evidence="4 5">
        <name>Mn(2+)</name>
        <dbReference type="ChEBI" id="CHEBI:29035"/>
    </cofactor>
    <text evidence="4 5">Binds 2 manganese ions per subunit.</text>
</comment>
<comment type="activity regulation">
    <text evidence="4">Inhibited by bestatin.</text>
</comment>
<comment type="subunit">
    <text evidence="5">Homodimer.</text>
</comment>
<comment type="subcellular location">
    <subcellularLocation>
        <location evidence="3">Cytoplasm</location>
    </subcellularLocation>
</comment>
<comment type="tissue specificity">
    <text evidence="4">Highly expressed in the parafascicular nucleus of the thalamus, tuberomammillary nucleus of the hypothalamus and the mitral cell layer of the olfactory bulb.</text>
</comment>
<comment type="similarity">
    <text evidence="8">Belongs to the peptidase M20A family.</text>
</comment>
<accession>Q9D1A2</accession>
<accession>Q3TA80</accession>
<accession>Q3TI32</accession>
<accession>Q3U7B9</accession>
<accession>Q99PV1</accession>
<protein>
    <recommendedName>
        <fullName>Cytosolic non-specific dipeptidase</fullName>
        <ecNumber evidence="4 6">3.4.13.18</ecNumber>
    </recommendedName>
    <alternativeName>
        <fullName>CNDP dipeptidase 2</fullName>
    </alternativeName>
    <alternativeName>
        <fullName>Glutamate carboxypeptidase-like protein 1</fullName>
    </alternativeName>
    <alternativeName>
        <fullName evidence="7">Threonyl dipeptidase</fullName>
    </alternativeName>
</protein>
<sequence>MSALKAVFQYIDENQDRYVKKLAEWVAIQSVSAWPEKRGEIRRMMEVAAADVQRLGGSVELVDIGKQKLPDGSEIPLPPILLGKLGSDPQKKTVCIYGHLDVQPAALEDGWDSEPFTLVEREGKLYGRGSTDDKGPVAGWMNALEAYQKTGQEIPVNLRFCLEGMEESGSEGLDELIFAQKDKFFKDVDYVCISDNYWLGKNKPCITYGLRGICYFFIEVECSDKDLHSGVYGGSVHEAMTDLISLMGCLVDKKGKILIPGINDAVAPVTDEEHALYDHIDFDMEEFAKDVGAETLLHSCKKDILMHRWRYPSLSLHGIEGAFSGSGAKTVIPRKVVGKFSIRLVPDMIPEVVSEQVSSYLSKKFAELQSPNKFKVYMGHGGKPWVSDFNHPHYQAGRRALKTVFGVEPDLTREGGSIPVTLTFQEATGKNVMLLPVGSADDGAHSQNEKLNRLNYIEGTKMLAAYLYEVSQLKN</sequence>
<name>CNDP2_MOUSE</name>
<keyword id="KW-0002">3D-structure</keyword>
<keyword id="KW-0121">Carboxypeptidase</keyword>
<keyword id="KW-0963">Cytoplasm</keyword>
<keyword id="KW-0903">Direct protein sequencing</keyword>
<keyword id="KW-0378">Hydrolase</keyword>
<keyword id="KW-0464">Manganese</keyword>
<keyword id="KW-0479">Metal-binding</keyword>
<keyword id="KW-0482">Metalloprotease</keyword>
<keyword id="KW-0597">Phosphoprotein</keyword>
<keyword id="KW-0645">Protease</keyword>
<keyword id="KW-1185">Reference proteome</keyword>
<dbReference type="EC" id="3.4.13.18" evidence="4 6"/>
<dbReference type="EMBL" id="AB046738">
    <property type="protein sequence ID" value="BAB21596.1"/>
    <property type="molecule type" value="mRNA"/>
</dbReference>
<dbReference type="EMBL" id="AK003779">
    <property type="protein sequence ID" value="BAB22991.1"/>
    <property type="molecule type" value="mRNA"/>
</dbReference>
<dbReference type="EMBL" id="AK151013">
    <property type="protein sequence ID" value="BAE30033.1"/>
    <property type="molecule type" value="mRNA"/>
</dbReference>
<dbReference type="EMBL" id="AK152729">
    <property type="protein sequence ID" value="BAE31451.1"/>
    <property type="molecule type" value="mRNA"/>
</dbReference>
<dbReference type="EMBL" id="AK168029">
    <property type="protein sequence ID" value="BAE40014.1"/>
    <property type="molecule type" value="mRNA"/>
</dbReference>
<dbReference type="EMBL" id="AK168652">
    <property type="protein sequence ID" value="BAE40509.1"/>
    <property type="molecule type" value="mRNA"/>
</dbReference>
<dbReference type="EMBL" id="AK172034">
    <property type="protein sequence ID" value="BAE42789.1"/>
    <property type="molecule type" value="mRNA"/>
</dbReference>
<dbReference type="EMBL" id="BC005532">
    <property type="protein sequence ID" value="AAH05532.1"/>
    <property type="molecule type" value="mRNA"/>
</dbReference>
<dbReference type="CCDS" id="CCDS29383.1"/>
<dbReference type="RefSeq" id="NP_001276460.1">
    <property type="nucleotide sequence ID" value="NM_001289531.1"/>
</dbReference>
<dbReference type="RefSeq" id="NP_075638.2">
    <property type="nucleotide sequence ID" value="NM_023149.3"/>
</dbReference>
<dbReference type="RefSeq" id="XP_030106430.1">
    <property type="nucleotide sequence ID" value="XM_030250570.2"/>
</dbReference>
<dbReference type="PDB" id="2ZOF">
    <property type="method" value="X-ray"/>
    <property type="resolution" value="2.30 A"/>
    <property type="chains" value="A/B=1-475"/>
</dbReference>
<dbReference type="PDB" id="2ZOG">
    <property type="method" value="X-ray"/>
    <property type="resolution" value="1.70 A"/>
    <property type="chains" value="A/B=1-475"/>
</dbReference>
<dbReference type="PDBsum" id="2ZOF"/>
<dbReference type="PDBsum" id="2ZOG"/>
<dbReference type="SMR" id="Q9D1A2"/>
<dbReference type="BioGRID" id="211181">
    <property type="interactions" value="24"/>
</dbReference>
<dbReference type="FunCoup" id="Q9D1A2">
    <property type="interactions" value="2326"/>
</dbReference>
<dbReference type="IntAct" id="Q9D1A2">
    <property type="interactions" value="2"/>
</dbReference>
<dbReference type="STRING" id="10090.ENSMUSP00000128696"/>
<dbReference type="MEROPS" id="M20.005"/>
<dbReference type="GlyGen" id="Q9D1A2">
    <property type="glycosylation" value="1 site, 1 O-linked glycan (1 site)"/>
</dbReference>
<dbReference type="iPTMnet" id="Q9D1A2"/>
<dbReference type="PhosphoSitePlus" id="Q9D1A2"/>
<dbReference type="SwissPalm" id="Q9D1A2"/>
<dbReference type="REPRODUCTION-2DPAGE" id="Q9D1A2"/>
<dbReference type="jPOST" id="Q9D1A2"/>
<dbReference type="PaxDb" id="10090-ENSMUSP00000128696"/>
<dbReference type="PeptideAtlas" id="Q9D1A2"/>
<dbReference type="ProteomicsDB" id="283648"/>
<dbReference type="Pumba" id="Q9D1A2"/>
<dbReference type="Antibodypedia" id="23332">
    <property type="antibodies" value="423 antibodies from 31 providers"/>
</dbReference>
<dbReference type="DNASU" id="66054"/>
<dbReference type="Ensembl" id="ENSMUST00000025546.17">
    <property type="protein sequence ID" value="ENSMUSP00000025546.10"/>
    <property type="gene ID" value="ENSMUSG00000024644.18"/>
</dbReference>
<dbReference type="Ensembl" id="ENSMUST00000168419.3">
    <property type="protein sequence ID" value="ENSMUSP00000128696.2"/>
    <property type="gene ID" value="ENSMUSG00000024644.18"/>
</dbReference>
<dbReference type="GeneID" id="66054"/>
<dbReference type="KEGG" id="mmu:66054"/>
<dbReference type="UCSC" id="uc008fut.2">
    <property type="organism name" value="mouse"/>
</dbReference>
<dbReference type="AGR" id="MGI:1913304"/>
<dbReference type="CTD" id="55748"/>
<dbReference type="MGI" id="MGI:1913304">
    <property type="gene designation" value="Cndp2"/>
</dbReference>
<dbReference type="VEuPathDB" id="HostDB:ENSMUSG00000024644"/>
<dbReference type="eggNOG" id="KOG2276">
    <property type="taxonomic scope" value="Eukaryota"/>
</dbReference>
<dbReference type="GeneTree" id="ENSGT00940000156500"/>
<dbReference type="HOGENOM" id="CLU_029469_3_1_1"/>
<dbReference type="InParanoid" id="Q9D1A2"/>
<dbReference type="OMA" id="CNVKFMI"/>
<dbReference type="OrthoDB" id="7832001at2759"/>
<dbReference type="PhylomeDB" id="Q9D1A2"/>
<dbReference type="TreeFam" id="TF300633"/>
<dbReference type="Reactome" id="R-MMU-174403">
    <property type="pathway name" value="Glutathione synthesis and recycling"/>
</dbReference>
<dbReference type="Reactome" id="R-MMU-9753281">
    <property type="pathway name" value="Paracetamol ADME"/>
</dbReference>
<dbReference type="BioGRID-ORCS" id="66054">
    <property type="hits" value="4 hits in 78 CRISPR screens"/>
</dbReference>
<dbReference type="ChiTaRS" id="Cndp2">
    <property type="organism name" value="mouse"/>
</dbReference>
<dbReference type="EvolutionaryTrace" id="Q9D1A2"/>
<dbReference type="PRO" id="PR:Q9D1A2"/>
<dbReference type="Proteomes" id="UP000000589">
    <property type="component" value="Chromosome 18"/>
</dbReference>
<dbReference type="RNAct" id="Q9D1A2">
    <property type="molecule type" value="protein"/>
</dbReference>
<dbReference type="Bgee" id="ENSMUSG00000024644">
    <property type="expression patterns" value="Expressed in vestibular membrane of cochlear duct and 260 other cell types or tissues"/>
</dbReference>
<dbReference type="ExpressionAtlas" id="Q9D1A2">
    <property type="expression patterns" value="baseline and differential"/>
</dbReference>
<dbReference type="GO" id="GO:0005829">
    <property type="term" value="C:cytosol"/>
    <property type="evidence" value="ECO:0000266"/>
    <property type="project" value="MGI"/>
</dbReference>
<dbReference type="GO" id="GO:0005654">
    <property type="term" value="C:nucleoplasm"/>
    <property type="evidence" value="ECO:0007669"/>
    <property type="project" value="Ensembl"/>
</dbReference>
<dbReference type="GO" id="GO:0004180">
    <property type="term" value="F:carboxypeptidase activity"/>
    <property type="evidence" value="ECO:0007669"/>
    <property type="project" value="UniProtKB-KW"/>
</dbReference>
<dbReference type="GO" id="GO:0016805">
    <property type="term" value="F:dipeptidase activity"/>
    <property type="evidence" value="ECO:0000314"/>
    <property type="project" value="UniProtKB"/>
</dbReference>
<dbReference type="GO" id="GO:0046872">
    <property type="term" value="F:metal ion binding"/>
    <property type="evidence" value="ECO:0007669"/>
    <property type="project" value="UniProtKB-KW"/>
</dbReference>
<dbReference type="GO" id="GO:0070573">
    <property type="term" value="F:metallodipeptidase activity"/>
    <property type="evidence" value="ECO:0007669"/>
    <property type="project" value="InterPro"/>
</dbReference>
<dbReference type="GO" id="GO:0008233">
    <property type="term" value="F:peptidase activity"/>
    <property type="evidence" value="ECO:0000314"/>
    <property type="project" value="MGI"/>
</dbReference>
<dbReference type="GO" id="GO:0006508">
    <property type="term" value="P:proteolysis"/>
    <property type="evidence" value="ECO:0000314"/>
    <property type="project" value="MGI"/>
</dbReference>
<dbReference type="CDD" id="cd05676">
    <property type="entry name" value="M20_dipept_like_CNDP"/>
    <property type="match status" value="1"/>
</dbReference>
<dbReference type="FunFam" id="3.30.70.360:FF:000008">
    <property type="entry name" value="Cytosolic non-specific dipeptidase"/>
    <property type="match status" value="1"/>
</dbReference>
<dbReference type="FunFam" id="3.40.630.10:FF:000014">
    <property type="entry name" value="Cytosolic non-specific dipeptidase"/>
    <property type="match status" value="1"/>
</dbReference>
<dbReference type="Gene3D" id="3.30.70.360">
    <property type="match status" value="1"/>
</dbReference>
<dbReference type="Gene3D" id="3.40.630.10">
    <property type="entry name" value="Zn peptidases"/>
    <property type="match status" value="1"/>
</dbReference>
<dbReference type="InterPro" id="IPR001261">
    <property type="entry name" value="ArgE/DapE_CS"/>
</dbReference>
<dbReference type="InterPro" id="IPR017153">
    <property type="entry name" value="CNDP/DUG1"/>
</dbReference>
<dbReference type="InterPro" id="IPR051458">
    <property type="entry name" value="Cyt/Met_Dipeptidase"/>
</dbReference>
<dbReference type="InterPro" id="IPR002933">
    <property type="entry name" value="Peptidase_M20"/>
</dbReference>
<dbReference type="InterPro" id="IPR011650">
    <property type="entry name" value="Peptidase_M20_dimer"/>
</dbReference>
<dbReference type="PANTHER" id="PTHR43270">
    <property type="entry name" value="BETA-ALA-HIS DIPEPTIDASE"/>
    <property type="match status" value="1"/>
</dbReference>
<dbReference type="PANTHER" id="PTHR43270:SF11">
    <property type="entry name" value="CYTOSOLIC NON-SPECIFIC DIPEPTIDASE"/>
    <property type="match status" value="1"/>
</dbReference>
<dbReference type="Pfam" id="PF07687">
    <property type="entry name" value="M20_dimer"/>
    <property type="match status" value="1"/>
</dbReference>
<dbReference type="Pfam" id="PF01546">
    <property type="entry name" value="Peptidase_M20"/>
    <property type="match status" value="1"/>
</dbReference>
<dbReference type="PIRSF" id="PIRSF037242">
    <property type="entry name" value="CNDP_dipeptidase"/>
    <property type="match status" value="1"/>
</dbReference>
<dbReference type="SUPFAM" id="SSF53187">
    <property type="entry name" value="Zn-dependent exopeptidases"/>
    <property type="match status" value="1"/>
</dbReference>
<dbReference type="PROSITE" id="PS00759">
    <property type="entry name" value="ARGE_DAPE_CPG2_2"/>
    <property type="match status" value="1"/>
</dbReference>
<organism>
    <name type="scientific">Mus musculus</name>
    <name type="common">Mouse</name>
    <dbReference type="NCBI Taxonomy" id="10090"/>
    <lineage>
        <taxon>Eukaryota</taxon>
        <taxon>Metazoa</taxon>
        <taxon>Chordata</taxon>
        <taxon>Craniata</taxon>
        <taxon>Vertebrata</taxon>
        <taxon>Euteleostomi</taxon>
        <taxon>Mammalia</taxon>
        <taxon>Eutheria</taxon>
        <taxon>Euarchontoglires</taxon>
        <taxon>Glires</taxon>
        <taxon>Rodentia</taxon>
        <taxon>Myomorpha</taxon>
        <taxon>Muroidea</taxon>
        <taxon>Muridae</taxon>
        <taxon>Murinae</taxon>
        <taxon>Mus</taxon>
        <taxon>Mus</taxon>
    </lineage>
</organism>
<proteinExistence type="evidence at protein level"/>
<gene>
    <name type="primary">Cndp2</name>
    <name type="synonym">Cn2</name>
</gene>
<evidence type="ECO:0000250" key="1"/>
<evidence type="ECO:0000250" key="2">
    <source>
        <dbReference type="UniProtKB" id="Q6Q0N1"/>
    </source>
</evidence>
<evidence type="ECO:0000250" key="3">
    <source>
        <dbReference type="UniProtKB" id="Q96KP4"/>
    </source>
</evidence>
<evidence type="ECO:0000269" key="4">
    <source>
    </source>
</evidence>
<evidence type="ECO:0000269" key="5">
    <source>
    </source>
</evidence>
<evidence type="ECO:0000269" key="6">
    <source>
    </source>
</evidence>
<evidence type="ECO:0000303" key="7">
    <source>
    </source>
</evidence>
<evidence type="ECO:0000305" key="8"/>
<evidence type="ECO:0007829" key="9">
    <source>
        <dbReference type="PDB" id="2ZOG"/>
    </source>
</evidence>
<reference key="1">
    <citation type="submission" date="2000-08" db="EMBL/GenBank/DDBJ databases">
        <title>Novel mouse gene differentially expressed in kidney.</title>
        <authorList>
            <person name="Yoshikawa T."/>
            <person name="Nagasugi Y."/>
            <person name="Sugano S."/>
            <person name="Hashimoto K."/>
            <person name="Masuho Y."/>
            <person name="Seki N."/>
        </authorList>
    </citation>
    <scope>NUCLEOTIDE SEQUENCE [MRNA]</scope>
    <source>
        <tissue>Brain</tissue>
    </source>
</reference>
<reference key="2">
    <citation type="journal article" date="2005" name="Science">
        <title>The transcriptional landscape of the mammalian genome.</title>
        <authorList>
            <person name="Carninci P."/>
            <person name="Kasukawa T."/>
            <person name="Katayama S."/>
            <person name="Gough J."/>
            <person name="Frith M.C."/>
            <person name="Maeda N."/>
            <person name="Oyama R."/>
            <person name="Ravasi T."/>
            <person name="Lenhard B."/>
            <person name="Wells C."/>
            <person name="Kodzius R."/>
            <person name="Shimokawa K."/>
            <person name="Bajic V.B."/>
            <person name="Brenner S.E."/>
            <person name="Batalov S."/>
            <person name="Forrest A.R."/>
            <person name="Zavolan M."/>
            <person name="Davis M.J."/>
            <person name="Wilming L.G."/>
            <person name="Aidinis V."/>
            <person name="Allen J.E."/>
            <person name="Ambesi-Impiombato A."/>
            <person name="Apweiler R."/>
            <person name="Aturaliya R.N."/>
            <person name="Bailey T.L."/>
            <person name="Bansal M."/>
            <person name="Baxter L."/>
            <person name="Beisel K.W."/>
            <person name="Bersano T."/>
            <person name="Bono H."/>
            <person name="Chalk A.M."/>
            <person name="Chiu K.P."/>
            <person name="Choudhary V."/>
            <person name="Christoffels A."/>
            <person name="Clutterbuck D.R."/>
            <person name="Crowe M.L."/>
            <person name="Dalla E."/>
            <person name="Dalrymple B.P."/>
            <person name="de Bono B."/>
            <person name="Della Gatta G."/>
            <person name="di Bernardo D."/>
            <person name="Down T."/>
            <person name="Engstrom P."/>
            <person name="Fagiolini M."/>
            <person name="Faulkner G."/>
            <person name="Fletcher C.F."/>
            <person name="Fukushima T."/>
            <person name="Furuno M."/>
            <person name="Futaki S."/>
            <person name="Gariboldi M."/>
            <person name="Georgii-Hemming P."/>
            <person name="Gingeras T.R."/>
            <person name="Gojobori T."/>
            <person name="Green R.E."/>
            <person name="Gustincich S."/>
            <person name="Harbers M."/>
            <person name="Hayashi Y."/>
            <person name="Hensch T.K."/>
            <person name="Hirokawa N."/>
            <person name="Hill D."/>
            <person name="Huminiecki L."/>
            <person name="Iacono M."/>
            <person name="Ikeo K."/>
            <person name="Iwama A."/>
            <person name="Ishikawa T."/>
            <person name="Jakt M."/>
            <person name="Kanapin A."/>
            <person name="Katoh M."/>
            <person name="Kawasawa Y."/>
            <person name="Kelso J."/>
            <person name="Kitamura H."/>
            <person name="Kitano H."/>
            <person name="Kollias G."/>
            <person name="Krishnan S.P."/>
            <person name="Kruger A."/>
            <person name="Kummerfeld S.K."/>
            <person name="Kurochkin I.V."/>
            <person name="Lareau L.F."/>
            <person name="Lazarevic D."/>
            <person name="Lipovich L."/>
            <person name="Liu J."/>
            <person name="Liuni S."/>
            <person name="McWilliam S."/>
            <person name="Madan Babu M."/>
            <person name="Madera M."/>
            <person name="Marchionni L."/>
            <person name="Matsuda H."/>
            <person name="Matsuzawa S."/>
            <person name="Miki H."/>
            <person name="Mignone F."/>
            <person name="Miyake S."/>
            <person name="Morris K."/>
            <person name="Mottagui-Tabar S."/>
            <person name="Mulder N."/>
            <person name="Nakano N."/>
            <person name="Nakauchi H."/>
            <person name="Ng P."/>
            <person name="Nilsson R."/>
            <person name="Nishiguchi S."/>
            <person name="Nishikawa S."/>
            <person name="Nori F."/>
            <person name="Ohara O."/>
            <person name="Okazaki Y."/>
            <person name="Orlando V."/>
            <person name="Pang K.C."/>
            <person name="Pavan W.J."/>
            <person name="Pavesi G."/>
            <person name="Pesole G."/>
            <person name="Petrovsky N."/>
            <person name="Piazza S."/>
            <person name="Reed J."/>
            <person name="Reid J.F."/>
            <person name="Ring B.Z."/>
            <person name="Ringwald M."/>
            <person name="Rost B."/>
            <person name="Ruan Y."/>
            <person name="Salzberg S.L."/>
            <person name="Sandelin A."/>
            <person name="Schneider C."/>
            <person name="Schoenbach C."/>
            <person name="Sekiguchi K."/>
            <person name="Semple C.A."/>
            <person name="Seno S."/>
            <person name="Sessa L."/>
            <person name="Sheng Y."/>
            <person name="Shibata Y."/>
            <person name="Shimada H."/>
            <person name="Shimada K."/>
            <person name="Silva D."/>
            <person name="Sinclair B."/>
            <person name="Sperling S."/>
            <person name="Stupka E."/>
            <person name="Sugiura K."/>
            <person name="Sultana R."/>
            <person name="Takenaka Y."/>
            <person name="Taki K."/>
            <person name="Tammoja K."/>
            <person name="Tan S.L."/>
            <person name="Tang S."/>
            <person name="Taylor M.S."/>
            <person name="Tegner J."/>
            <person name="Teichmann S.A."/>
            <person name="Ueda H.R."/>
            <person name="van Nimwegen E."/>
            <person name="Verardo R."/>
            <person name="Wei C.L."/>
            <person name="Yagi K."/>
            <person name="Yamanishi H."/>
            <person name="Zabarovsky E."/>
            <person name="Zhu S."/>
            <person name="Zimmer A."/>
            <person name="Hide W."/>
            <person name="Bult C."/>
            <person name="Grimmond S.M."/>
            <person name="Teasdale R.D."/>
            <person name="Liu E.T."/>
            <person name="Brusic V."/>
            <person name="Quackenbush J."/>
            <person name="Wahlestedt C."/>
            <person name="Mattick J.S."/>
            <person name="Hume D.A."/>
            <person name="Kai C."/>
            <person name="Sasaki D."/>
            <person name="Tomaru Y."/>
            <person name="Fukuda S."/>
            <person name="Kanamori-Katayama M."/>
            <person name="Suzuki M."/>
            <person name="Aoki J."/>
            <person name="Arakawa T."/>
            <person name="Iida J."/>
            <person name="Imamura K."/>
            <person name="Itoh M."/>
            <person name="Kato T."/>
            <person name="Kawaji H."/>
            <person name="Kawagashira N."/>
            <person name="Kawashima T."/>
            <person name="Kojima M."/>
            <person name="Kondo S."/>
            <person name="Konno H."/>
            <person name="Nakano K."/>
            <person name="Ninomiya N."/>
            <person name="Nishio T."/>
            <person name="Okada M."/>
            <person name="Plessy C."/>
            <person name="Shibata K."/>
            <person name="Shiraki T."/>
            <person name="Suzuki S."/>
            <person name="Tagami M."/>
            <person name="Waki K."/>
            <person name="Watahiki A."/>
            <person name="Okamura-Oho Y."/>
            <person name="Suzuki H."/>
            <person name="Kawai J."/>
            <person name="Hayashizaki Y."/>
        </authorList>
    </citation>
    <scope>NUCLEOTIDE SEQUENCE [LARGE SCALE MRNA]</scope>
    <source>
        <strain>BALB/cJ</strain>
        <strain>C57BL/6J</strain>
        <strain>NOD</strain>
        <tissue>Bone marrow macrophage</tissue>
        <tissue>Embryonic heart</tissue>
        <tissue>Heart</tissue>
        <tissue>Spleen</tissue>
    </source>
</reference>
<reference key="3">
    <citation type="journal article" date="2004" name="Genome Res.">
        <title>The status, quality, and expansion of the NIH full-length cDNA project: the Mammalian Gene Collection (MGC).</title>
        <authorList>
            <consortium name="The MGC Project Team"/>
        </authorList>
    </citation>
    <scope>NUCLEOTIDE SEQUENCE [LARGE SCALE MRNA]</scope>
    <source>
        <tissue>Mammary gland</tissue>
    </source>
</reference>
<reference key="4">
    <citation type="submission" date="2007-03" db="UniProtKB">
        <authorList>
            <person name="Lubec G."/>
            <person name="Klug S."/>
        </authorList>
    </citation>
    <scope>PROTEIN SEQUENCE OF 6-17; 311-329 AND 414-430</scope>
    <scope>IDENTIFICATION BY MASS SPECTROMETRY</scope>
    <source>
        <tissue>Hippocampus</tissue>
    </source>
</reference>
<reference key="5">
    <citation type="journal article" date="2005" name="J. Biochem.">
        <title>Identification and characterization of a mouse dipeptidase that hydrolyzes L-carnosine.</title>
        <authorList>
            <person name="Otani H."/>
            <person name="Okumura N."/>
            <person name="Hashida-Okumura A."/>
            <person name="Nagai K."/>
        </authorList>
    </citation>
    <scope>ACTIVITY REGULATION</scope>
    <scope>COFACTOR</scope>
    <scope>CATALYTIC ACTIVITY</scope>
    <scope>TISSUE SPECIFICITY</scope>
</reference>
<reference key="6">
    <citation type="journal article" date="2010" name="Cell">
        <title>A tissue-specific atlas of mouse protein phosphorylation and expression.</title>
        <authorList>
            <person name="Huttlin E.L."/>
            <person name="Jedrychowski M.P."/>
            <person name="Elias J.E."/>
            <person name="Goswami T."/>
            <person name="Rad R."/>
            <person name="Beausoleil S.A."/>
            <person name="Villen J."/>
            <person name="Haas W."/>
            <person name="Sowa M.E."/>
            <person name="Gygi S.P."/>
        </authorList>
    </citation>
    <scope>IDENTIFICATION BY MASS SPECTROMETRY [LARGE SCALE ANALYSIS]</scope>
    <source>
        <tissue>Brain</tissue>
        <tissue>Brown adipose tissue</tissue>
        <tissue>Heart</tissue>
        <tissue>Kidney</tissue>
        <tissue>Liver</tissue>
        <tissue>Lung</tissue>
        <tissue>Pancreas</tissue>
        <tissue>Spleen</tissue>
        <tissue>Testis</tissue>
    </source>
</reference>
<reference key="7">
    <citation type="journal article" date="2019" name="Cell Chem. Biol.">
        <title>Family-wide Annotation of Enzymatic Pathways by Parallel In Vivo Metabolomics.</title>
        <authorList>
            <person name="Kim J.T."/>
            <person name="Li V.L."/>
            <person name="Terrell S.M."/>
            <person name="Fischer C.R."/>
            <person name="Long J.Z."/>
        </authorList>
    </citation>
    <scope>FUNCTION</scope>
    <scope>CATALYTIC ACTIVITY</scope>
    <scope>MUTAGENESIS OF GLU-166</scope>
</reference>
<reference key="8">
    <citation type="journal article" date="2008" name="J. Biol. Chem.">
        <title>Structural basis for substrate recognition and hydrolysis by mouse carnosinase CN2.</title>
        <authorList>
            <person name="Unno H."/>
            <person name="Yamashita T."/>
            <person name="Ujita S."/>
            <person name="Okumura N."/>
            <person name="Otani H."/>
            <person name="Okumura A."/>
            <person name="Nagai K."/>
            <person name="Kusunoki M."/>
        </authorList>
    </citation>
    <scope>X-RAY CRYSTALLOGRAPHY (1.7 ANGSTROMS) IN COMPLEX WITH MANGANESE AND BESTATIN</scope>
    <scope>MUTAGENESIS OF HIS-228</scope>
    <scope>COFACTOR</scope>
    <scope>SUBUNIT</scope>
</reference>
<feature type="chain" id="PRO_0000185273" description="Cytosolic non-specific dipeptidase">
    <location>
        <begin position="1"/>
        <end position="475"/>
    </location>
</feature>
<feature type="active site" evidence="1">
    <location>
        <position position="101"/>
    </location>
</feature>
<feature type="active site" description="Proton acceptor" evidence="1">
    <location>
        <position position="166"/>
    </location>
</feature>
<feature type="binding site" evidence="5">
    <location>
        <position position="99"/>
    </location>
    <ligand>
        <name>Mn(2+)</name>
        <dbReference type="ChEBI" id="CHEBI:29035"/>
        <label>2</label>
    </ligand>
</feature>
<feature type="binding site" evidence="5">
    <location>
        <position position="132"/>
    </location>
    <ligand>
        <name>Mn(2+)</name>
        <dbReference type="ChEBI" id="CHEBI:29035"/>
        <label>1</label>
    </ligand>
</feature>
<feature type="binding site" evidence="5">
    <location>
        <position position="132"/>
    </location>
    <ligand>
        <name>Mn(2+)</name>
        <dbReference type="ChEBI" id="CHEBI:29035"/>
        <label>2</label>
    </ligand>
</feature>
<feature type="binding site" description="in other chain">
    <location>
        <begin position="166"/>
        <end position="167"/>
    </location>
    <ligand>
        <name>substrate</name>
        <note>ligand shared between homodimeric partners</note>
    </ligand>
</feature>
<feature type="binding site" evidence="5">
    <location>
        <position position="167"/>
    </location>
    <ligand>
        <name>Mn(2+)</name>
        <dbReference type="ChEBI" id="CHEBI:29035"/>
        <label>1</label>
    </ligand>
</feature>
<feature type="binding site" evidence="5">
    <location>
        <position position="195"/>
    </location>
    <ligand>
        <name>Mn(2+)</name>
        <dbReference type="ChEBI" id="CHEBI:29035"/>
        <label>2</label>
    </ligand>
</feature>
<feature type="binding site" description="in other chain">
    <location>
        <position position="195"/>
    </location>
    <ligand>
        <name>substrate</name>
        <note>ligand shared between homodimeric partners</note>
    </ligand>
</feature>
<feature type="binding site">
    <location>
        <position position="228"/>
    </location>
    <ligand>
        <name>substrate</name>
        <note>ligand shared between homodimeric partners</note>
    </ligand>
</feature>
<feature type="binding site">
    <location>
        <position position="330"/>
    </location>
    <ligand>
        <name>substrate</name>
        <note>ligand shared between homodimeric partners</note>
    </ligand>
</feature>
<feature type="binding site" description="in other chain">
    <location>
        <position position="343"/>
    </location>
    <ligand>
        <name>substrate</name>
        <note>ligand shared between homodimeric partners</note>
    </ligand>
</feature>
<feature type="binding site" description="in other chain">
    <location>
        <position position="417"/>
    </location>
    <ligand>
        <name>substrate</name>
        <note>ligand shared between homodimeric partners</note>
    </ligand>
</feature>
<feature type="binding site" evidence="5">
    <location>
        <position position="445"/>
    </location>
    <ligand>
        <name>Mn(2+)</name>
        <dbReference type="ChEBI" id="CHEBI:29035"/>
        <label>1</label>
    </ligand>
</feature>
<feature type="binding site" description="in other chain">
    <location>
        <position position="445"/>
    </location>
    <ligand>
        <name>substrate</name>
        <note>ligand shared between homodimeric partners</note>
    </ligand>
</feature>
<feature type="site" description="Important for catalytic activity">
    <location>
        <position position="228"/>
    </location>
</feature>
<feature type="modified residue" description="Phosphoserine" evidence="2">
    <location>
        <position position="58"/>
    </location>
</feature>
<feature type="modified residue" description="Phosphoserine" evidence="3">
    <location>
        <position position="299"/>
    </location>
</feature>
<feature type="mutagenesis site" description="Loss of threonyl dipeptidase activity." evidence="6">
    <original>E</original>
    <variation>A</variation>
    <location>
        <position position="166"/>
    </location>
</feature>
<feature type="mutagenesis site" description="Loss of activity." evidence="5">
    <original>H</original>
    <variation>A</variation>
    <location>
        <position position="228"/>
    </location>
</feature>
<feature type="sequence conflict" description="In Ref. 2; BAE31451." evidence="8" ref="2">
    <original>M</original>
    <variation>I</variation>
    <location>
        <position position="45"/>
    </location>
</feature>
<feature type="sequence conflict" description="In Ref. 2; BAE42789." evidence="8" ref="2">
    <original>A</original>
    <variation>T</variation>
    <location>
        <position position="105"/>
    </location>
</feature>
<feature type="sequence conflict" description="In Ref. 1; BAB21596." evidence="8" ref="1">
    <original>V</original>
    <variation>A</variation>
    <location>
        <position position="357"/>
    </location>
</feature>
<feature type="helix" evidence="9">
    <location>
        <begin position="1"/>
        <end position="13"/>
    </location>
</feature>
<feature type="helix" evidence="9">
    <location>
        <begin position="15"/>
        <end position="27"/>
    </location>
</feature>
<feature type="helix" evidence="9">
    <location>
        <begin position="35"/>
        <end position="37"/>
    </location>
</feature>
<feature type="helix" evidence="9">
    <location>
        <begin position="38"/>
        <end position="54"/>
    </location>
</feature>
<feature type="strand" evidence="9">
    <location>
        <begin position="58"/>
        <end position="62"/>
    </location>
</feature>
<feature type="strand" evidence="9">
    <location>
        <begin position="66"/>
        <end position="68"/>
    </location>
</feature>
<feature type="strand" evidence="9">
    <location>
        <begin position="74"/>
        <end position="76"/>
    </location>
</feature>
<feature type="strand" evidence="9">
    <location>
        <begin position="80"/>
        <end position="85"/>
    </location>
</feature>
<feature type="strand" evidence="9">
    <location>
        <begin position="93"/>
        <end position="99"/>
    </location>
</feature>
<feature type="helix" evidence="9">
    <location>
        <begin position="107"/>
        <end position="109"/>
    </location>
</feature>
<feature type="strand" evidence="9">
    <location>
        <begin position="119"/>
        <end position="121"/>
    </location>
</feature>
<feature type="strand" evidence="9">
    <location>
        <begin position="124"/>
        <end position="127"/>
    </location>
</feature>
<feature type="turn" evidence="9">
    <location>
        <begin position="128"/>
        <end position="133"/>
    </location>
</feature>
<feature type="helix" evidence="9">
    <location>
        <begin position="134"/>
        <end position="149"/>
    </location>
</feature>
<feature type="strand" evidence="9">
    <location>
        <begin position="155"/>
        <end position="164"/>
    </location>
</feature>
<feature type="helix" evidence="9">
    <location>
        <begin position="166"/>
        <end position="168"/>
    </location>
</feature>
<feature type="helix" evidence="9">
    <location>
        <begin position="173"/>
        <end position="179"/>
    </location>
</feature>
<feature type="turn" evidence="9">
    <location>
        <begin position="180"/>
        <end position="187"/>
    </location>
</feature>
<feature type="strand" evidence="9">
    <location>
        <begin position="190"/>
        <end position="193"/>
    </location>
</feature>
<feature type="strand" evidence="9">
    <location>
        <begin position="199"/>
        <end position="203"/>
    </location>
</feature>
<feature type="strand" evidence="9">
    <location>
        <begin position="205"/>
        <end position="210"/>
    </location>
</feature>
<feature type="strand" evidence="9">
    <location>
        <begin position="212"/>
        <end position="221"/>
    </location>
</feature>
<feature type="helix" evidence="9">
    <location>
        <begin position="229"/>
        <end position="232"/>
    </location>
</feature>
<feature type="turn" evidence="9">
    <location>
        <begin position="233"/>
        <end position="235"/>
    </location>
</feature>
<feature type="helix" evidence="9">
    <location>
        <begin position="239"/>
        <end position="247"/>
    </location>
</feature>
<feature type="turn" evidence="9">
    <location>
        <begin position="260"/>
        <end position="265"/>
    </location>
</feature>
<feature type="helix" evidence="9">
    <location>
        <begin position="271"/>
        <end position="276"/>
    </location>
</feature>
<feature type="helix" evidence="9">
    <location>
        <begin position="284"/>
        <end position="290"/>
    </location>
</feature>
<feature type="helix" evidence="9">
    <location>
        <begin position="301"/>
        <end position="309"/>
    </location>
</feature>
<feature type="strand" evidence="9">
    <location>
        <begin position="313"/>
        <end position="322"/>
    </location>
</feature>
<feature type="strand" evidence="9">
    <location>
        <begin position="325"/>
        <end position="327"/>
    </location>
</feature>
<feature type="strand" evidence="9">
    <location>
        <begin position="334"/>
        <end position="344"/>
    </location>
</feature>
<feature type="helix" evidence="9">
    <location>
        <begin position="350"/>
        <end position="366"/>
    </location>
</feature>
<feature type="strand" evidence="9">
    <location>
        <begin position="372"/>
        <end position="382"/>
    </location>
</feature>
<feature type="helix" evidence="9">
    <location>
        <begin position="392"/>
        <end position="405"/>
    </location>
</feature>
<feature type="strand" evidence="9">
    <location>
        <begin position="410"/>
        <end position="416"/>
    </location>
</feature>
<feature type="helix" evidence="9">
    <location>
        <begin position="420"/>
        <end position="428"/>
    </location>
</feature>
<feature type="strand" evidence="9">
    <location>
        <begin position="430"/>
        <end position="434"/>
    </location>
</feature>
<feature type="strand" evidence="9">
    <location>
        <begin position="450"/>
        <end position="452"/>
    </location>
</feature>
<feature type="helix" evidence="9">
    <location>
        <begin position="453"/>
        <end position="472"/>
    </location>
</feature>